<feature type="chain" id="PRO_0000324768" description="Kelch repeat and BTB domain-containing protein 12">
    <location>
        <begin position="1"/>
        <end position="623"/>
    </location>
</feature>
<feature type="domain" description="BTB" evidence="1">
    <location>
        <begin position="25"/>
        <end position="92"/>
    </location>
</feature>
<feature type="domain" description="BACK">
    <location>
        <begin position="127"/>
        <end position="236"/>
    </location>
</feature>
<feature type="repeat" description="Kelch 1">
    <location>
        <begin position="390"/>
        <end position="440"/>
    </location>
</feature>
<feature type="repeat" description="Kelch 2">
    <location>
        <begin position="441"/>
        <end position="496"/>
    </location>
</feature>
<feature type="repeat" description="Kelch 3">
    <location>
        <begin position="498"/>
        <end position="551"/>
    </location>
</feature>
<feature type="repeat" description="Kelch 4">
    <location>
        <begin position="557"/>
        <end position="607"/>
    </location>
</feature>
<gene>
    <name type="primary">kbtbd12</name>
    <name type="synonym">klhdc6</name>
    <name type="ORF">zgc:113365</name>
</gene>
<dbReference type="EMBL" id="BC103489">
    <property type="protein sequence ID" value="AAI03490.1"/>
    <property type="molecule type" value="mRNA"/>
</dbReference>
<dbReference type="RefSeq" id="NP_001029089.1">
    <property type="nucleotide sequence ID" value="NM_001033917.2"/>
</dbReference>
<dbReference type="SMR" id="Q3ZB90"/>
<dbReference type="FunCoup" id="Q3ZB90">
    <property type="interactions" value="309"/>
</dbReference>
<dbReference type="STRING" id="7955.ENSDARP00000038002"/>
<dbReference type="PaxDb" id="7955-ENSDARP00000038002"/>
<dbReference type="Ensembl" id="ENSDART00000035101">
    <property type="protein sequence ID" value="ENSDARP00000038002"/>
    <property type="gene ID" value="ENSDARG00000001882"/>
</dbReference>
<dbReference type="Ensembl" id="ENSDART00000188187">
    <property type="protein sequence ID" value="ENSDARP00000145104"/>
    <property type="gene ID" value="ENSDARG00000001882"/>
</dbReference>
<dbReference type="GeneID" id="559380"/>
<dbReference type="KEGG" id="dre:559380"/>
<dbReference type="AGR" id="ZFIN:ZDB-GENE-050904-1"/>
<dbReference type="CTD" id="166348"/>
<dbReference type="ZFIN" id="ZDB-GENE-050904-1">
    <property type="gene designation" value="kbtbd12"/>
</dbReference>
<dbReference type="eggNOG" id="KOG4441">
    <property type="taxonomic scope" value="Eukaryota"/>
</dbReference>
<dbReference type="HOGENOM" id="CLU_004253_14_6_1"/>
<dbReference type="InParanoid" id="Q3ZB90"/>
<dbReference type="OMA" id="DYWRDGP"/>
<dbReference type="OrthoDB" id="45365at2759"/>
<dbReference type="PhylomeDB" id="Q3ZB90"/>
<dbReference type="TreeFam" id="TF351656"/>
<dbReference type="PRO" id="PR:Q3ZB90"/>
<dbReference type="Proteomes" id="UP000000437">
    <property type="component" value="Chromosome 6"/>
</dbReference>
<dbReference type="Bgee" id="ENSDARG00000001882">
    <property type="expression patterns" value="Expressed in muscle tissue and 12 other cell types or tissues"/>
</dbReference>
<dbReference type="GO" id="GO:0031463">
    <property type="term" value="C:Cul3-RING ubiquitin ligase complex"/>
    <property type="evidence" value="ECO:0000318"/>
    <property type="project" value="GO_Central"/>
</dbReference>
<dbReference type="GO" id="GO:0005737">
    <property type="term" value="C:cytoplasm"/>
    <property type="evidence" value="ECO:0000318"/>
    <property type="project" value="GO_Central"/>
</dbReference>
<dbReference type="GO" id="GO:1990756">
    <property type="term" value="F:ubiquitin-like ligase-substrate adaptor activity"/>
    <property type="evidence" value="ECO:0000318"/>
    <property type="project" value="GO_Central"/>
</dbReference>
<dbReference type="GO" id="GO:0043161">
    <property type="term" value="P:proteasome-mediated ubiquitin-dependent protein catabolic process"/>
    <property type="evidence" value="ECO:0000318"/>
    <property type="project" value="GO_Central"/>
</dbReference>
<dbReference type="CDD" id="cd18485">
    <property type="entry name" value="BACK_KBTBD12"/>
    <property type="match status" value="1"/>
</dbReference>
<dbReference type="FunFam" id="1.25.40.420:FF:000001">
    <property type="entry name" value="Kelch-like family member 12"/>
    <property type="match status" value="1"/>
</dbReference>
<dbReference type="Gene3D" id="1.25.40.420">
    <property type="match status" value="1"/>
</dbReference>
<dbReference type="Gene3D" id="2.120.10.80">
    <property type="entry name" value="Kelch-type beta propeller"/>
    <property type="match status" value="1"/>
</dbReference>
<dbReference type="Gene3D" id="3.30.710.10">
    <property type="entry name" value="Potassium Channel Kv1.1, Chain A"/>
    <property type="match status" value="1"/>
</dbReference>
<dbReference type="InterPro" id="IPR011705">
    <property type="entry name" value="BACK"/>
</dbReference>
<dbReference type="InterPro" id="IPR017096">
    <property type="entry name" value="BTB-kelch_protein"/>
</dbReference>
<dbReference type="InterPro" id="IPR000210">
    <property type="entry name" value="BTB/POZ_dom"/>
</dbReference>
<dbReference type="InterPro" id="IPR015915">
    <property type="entry name" value="Kelch-typ_b-propeller"/>
</dbReference>
<dbReference type="InterPro" id="IPR006652">
    <property type="entry name" value="Kelch_1"/>
</dbReference>
<dbReference type="InterPro" id="IPR011333">
    <property type="entry name" value="SKP1/BTB/POZ_sf"/>
</dbReference>
<dbReference type="PANTHER" id="PTHR24412">
    <property type="entry name" value="KELCH PROTEIN"/>
    <property type="match status" value="1"/>
</dbReference>
<dbReference type="PANTHER" id="PTHR24412:SF491">
    <property type="entry name" value="KELCH REPEAT AND BTB DOMAIN-CONTAINING PROTEIN 12"/>
    <property type="match status" value="1"/>
</dbReference>
<dbReference type="Pfam" id="PF07707">
    <property type="entry name" value="BACK"/>
    <property type="match status" value="1"/>
</dbReference>
<dbReference type="Pfam" id="PF00651">
    <property type="entry name" value="BTB"/>
    <property type="match status" value="1"/>
</dbReference>
<dbReference type="Pfam" id="PF24681">
    <property type="entry name" value="Kelch_KLHDC2_KLHL20_DRC7"/>
    <property type="match status" value="1"/>
</dbReference>
<dbReference type="PIRSF" id="PIRSF037037">
    <property type="entry name" value="Kelch-like_protein_gigaxonin"/>
    <property type="match status" value="1"/>
</dbReference>
<dbReference type="SMART" id="SM00875">
    <property type="entry name" value="BACK"/>
    <property type="match status" value="1"/>
</dbReference>
<dbReference type="SMART" id="SM00225">
    <property type="entry name" value="BTB"/>
    <property type="match status" value="1"/>
</dbReference>
<dbReference type="SMART" id="SM00612">
    <property type="entry name" value="Kelch"/>
    <property type="match status" value="4"/>
</dbReference>
<dbReference type="SUPFAM" id="SSF117281">
    <property type="entry name" value="Kelch motif"/>
    <property type="match status" value="1"/>
</dbReference>
<dbReference type="SUPFAM" id="SSF54695">
    <property type="entry name" value="POZ domain"/>
    <property type="match status" value="1"/>
</dbReference>
<dbReference type="PROSITE" id="PS50097">
    <property type="entry name" value="BTB"/>
    <property type="match status" value="1"/>
</dbReference>
<proteinExistence type="evidence at transcript level"/>
<keyword id="KW-0880">Kelch repeat</keyword>
<keyword id="KW-1185">Reference proteome</keyword>
<keyword id="KW-0677">Repeat</keyword>
<name>KBTBC_DANRE</name>
<evidence type="ECO:0000255" key="1">
    <source>
        <dbReference type="PROSITE-ProRule" id="PRU00037"/>
    </source>
</evidence>
<accession>Q3ZB90</accession>
<protein>
    <recommendedName>
        <fullName>Kelch repeat and BTB domain-containing protein 12</fullName>
    </recommendedName>
    <alternativeName>
        <fullName>Kelch domain-containing protein 6</fullName>
    </alternativeName>
</protein>
<sequence>MDLRAKHGLTLLEQLNRMRDAEQLTDVVLVAEGVSFPCHRAVLSAFSPYFRVMFTCGLRECSNRQVVLRDMPAPSLALLLEYMYSSNLPLTADNVQGISVAAFLLQMDDVFSRCQIYMIDNMDTTNCLGIYYYARDLGAEELADQAQRYLRQHFTEVCYGEEVLELEAHQLGALLSSDDLNVSREESILDVVMRWVKYCPGDVGSEEENRARHLPELLKKVRLPLVGVDYLKGTMKRNTALLVDAECLQIMEEAIEAASLDSDAPPRRLKLRYGMETTDLLLCIGNEGGGIRSRYGSYTERSFCYAPTTGRTLFITSPRYGEALGYVFAGVVTEKNEIVVSGELGARKMARHKDKNVEIFMYNKEAQGSWKHLSSAEYRDSYALSSLGENLYLIGGQMKLKNQYHITNSVERWSLQGGPWRSTAPLPMPLAYHSVVRMKGRLYVLGGRTPQSFRTDDEPDRMSNRLLEYDPETNKWNELGPMKFSKYRCSAVALNGEIYVLGGIGCEGVDRGQSRYCLNVVEIYNPDGDFWRDGPPLPWPLLTLRSNASNAGVVDGKLYVCGYYKGADRHDTITKDILQLDPWENVWTVVAKQALMHDSYDVCLVANLNPRGLMPPPADLVEE</sequence>
<reference key="1">
    <citation type="submission" date="2005-08" db="EMBL/GenBank/DDBJ databases">
        <authorList>
            <consortium name="NIH - Zebrafish Gene Collection (ZGC) project"/>
        </authorList>
    </citation>
    <scope>NUCLEOTIDE SEQUENCE [LARGE SCALE MRNA]</scope>
    <source>
        <tissue>Embryo</tissue>
    </source>
</reference>
<organism>
    <name type="scientific">Danio rerio</name>
    <name type="common">Zebrafish</name>
    <name type="synonym">Brachydanio rerio</name>
    <dbReference type="NCBI Taxonomy" id="7955"/>
    <lineage>
        <taxon>Eukaryota</taxon>
        <taxon>Metazoa</taxon>
        <taxon>Chordata</taxon>
        <taxon>Craniata</taxon>
        <taxon>Vertebrata</taxon>
        <taxon>Euteleostomi</taxon>
        <taxon>Actinopterygii</taxon>
        <taxon>Neopterygii</taxon>
        <taxon>Teleostei</taxon>
        <taxon>Ostariophysi</taxon>
        <taxon>Cypriniformes</taxon>
        <taxon>Danionidae</taxon>
        <taxon>Danioninae</taxon>
        <taxon>Danio</taxon>
    </lineage>
</organism>